<evidence type="ECO:0000255" key="1">
    <source>
        <dbReference type="HAMAP-Rule" id="MF_01346"/>
    </source>
</evidence>
<feature type="chain" id="PRO_0000275174" description="ATP synthase subunit alpha, chloroplastic">
    <location>
        <begin position="1"/>
        <end position="504"/>
    </location>
</feature>
<feature type="binding site" evidence="1">
    <location>
        <begin position="169"/>
        <end position="176"/>
    </location>
    <ligand>
        <name>ATP</name>
        <dbReference type="ChEBI" id="CHEBI:30616"/>
    </ligand>
</feature>
<feature type="site" description="Required for activity" evidence="1">
    <location>
        <position position="362"/>
    </location>
</feature>
<comment type="function">
    <text evidence="1">Produces ATP from ADP in the presence of a proton gradient across the membrane. The alpha chain is a regulatory subunit.</text>
</comment>
<comment type="catalytic activity">
    <reaction evidence="1">
        <text>ATP + H2O + 4 H(+)(in) = ADP + phosphate + 5 H(+)(out)</text>
        <dbReference type="Rhea" id="RHEA:57720"/>
        <dbReference type="ChEBI" id="CHEBI:15377"/>
        <dbReference type="ChEBI" id="CHEBI:15378"/>
        <dbReference type="ChEBI" id="CHEBI:30616"/>
        <dbReference type="ChEBI" id="CHEBI:43474"/>
        <dbReference type="ChEBI" id="CHEBI:456216"/>
        <dbReference type="EC" id="7.1.2.2"/>
    </reaction>
</comment>
<comment type="subunit">
    <text evidence="1">F-type ATPases have 2 components, CF(1) - the catalytic core - and CF(0) - the membrane proton channel. CF(1) has five subunits: alpha(3), beta(3), gamma(1), delta(1), epsilon(1). CF(0) has four main subunits: a, b, b' and c.</text>
</comment>
<comment type="subcellular location">
    <subcellularLocation>
        <location evidence="1">Plastid</location>
        <location evidence="1">Chloroplast thylakoid membrane</location>
        <topology evidence="1">Peripheral membrane protein</topology>
    </subcellularLocation>
</comment>
<comment type="similarity">
    <text evidence="1">Belongs to the ATPase alpha/beta chains family.</text>
</comment>
<name>ATPA_STIHE</name>
<sequence>MKMRPEEISSIIMKQIEQYNQEVQVVNFGTVFQVGDGIARIYGLEKVMAGELLEFEDGTIGIALNLEAKNVGAVLMGDGLKIKEGSKVRATGKVAQIAVGEGYLGRVVDSLARPIDGKGDIASDDTRLIESPAPGIISRRSVHEPLQTGLIAVDAMIPIGRGQRELIIGDRQTGKTAIAIDTILNQKGKNVICVYVAIGQKASSVAQVVNTLRERGALDYTVIVTANADSAATLQYLAPYTGATIAEYFMYTNRHTLVIYDDLSKQAQAYREMSLLLRRPPGREAYPGDVFYLHSRLLERAAKLNDALGSGSMTALPIVETQEGDVSAYIPTNVISITDGQIFLSADIFNSGVRPAINVGISVSRVGSAAQPKAMKQVAGSLKLQLAQFEELRAFSQFASDLDQATQNQLARGARLVEILKQAQNSPLGLAEQVASIYAGNNGYFDNLQVLQVRPFLIGLRQLLATKYSKYGEIVASAQTLTPEAETILKQAITEYLDEFGAKK</sequence>
<organism>
    <name type="scientific">Stigeoclonium helveticum</name>
    <name type="common">Green alga</name>
    <dbReference type="NCBI Taxonomy" id="55999"/>
    <lineage>
        <taxon>Eukaryota</taxon>
        <taxon>Viridiplantae</taxon>
        <taxon>Chlorophyta</taxon>
        <taxon>core chlorophytes</taxon>
        <taxon>Chlorophyceae</taxon>
        <taxon>OCC clade</taxon>
        <taxon>Chaetophorales</taxon>
        <taxon>Chaetophoraceae</taxon>
        <taxon>Stigeoclonium</taxon>
    </lineage>
</organism>
<proteinExistence type="inferred from homology"/>
<dbReference type="EC" id="7.1.2.2" evidence="1"/>
<dbReference type="EMBL" id="DQ630521">
    <property type="protein sequence ID" value="ABF60146.1"/>
    <property type="molecule type" value="Genomic_DNA"/>
</dbReference>
<dbReference type="RefSeq" id="YP_764384.1">
    <property type="nucleotide sequence ID" value="NC_008372.1"/>
</dbReference>
<dbReference type="SMR" id="Q06SI2"/>
<dbReference type="GeneID" id="4308389"/>
<dbReference type="GO" id="GO:0009535">
    <property type="term" value="C:chloroplast thylakoid membrane"/>
    <property type="evidence" value="ECO:0007669"/>
    <property type="project" value="UniProtKB-SubCell"/>
</dbReference>
<dbReference type="GO" id="GO:0045259">
    <property type="term" value="C:proton-transporting ATP synthase complex"/>
    <property type="evidence" value="ECO:0007669"/>
    <property type="project" value="UniProtKB-KW"/>
</dbReference>
<dbReference type="GO" id="GO:0043531">
    <property type="term" value="F:ADP binding"/>
    <property type="evidence" value="ECO:0007669"/>
    <property type="project" value="TreeGrafter"/>
</dbReference>
<dbReference type="GO" id="GO:0005524">
    <property type="term" value="F:ATP binding"/>
    <property type="evidence" value="ECO:0007669"/>
    <property type="project" value="UniProtKB-UniRule"/>
</dbReference>
<dbReference type="GO" id="GO:0046933">
    <property type="term" value="F:proton-transporting ATP synthase activity, rotational mechanism"/>
    <property type="evidence" value="ECO:0007669"/>
    <property type="project" value="UniProtKB-UniRule"/>
</dbReference>
<dbReference type="CDD" id="cd18113">
    <property type="entry name" value="ATP-synt_F1_alpha_C"/>
    <property type="match status" value="1"/>
</dbReference>
<dbReference type="CDD" id="cd18116">
    <property type="entry name" value="ATP-synt_F1_alpha_N"/>
    <property type="match status" value="1"/>
</dbReference>
<dbReference type="CDD" id="cd01132">
    <property type="entry name" value="F1-ATPase_alpha_CD"/>
    <property type="match status" value="1"/>
</dbReference>
<dbReference type="FunFam" id="1.20.150.20:FF:000001">
    <property type="entry name" value="ATP synthase subunit alpha"/>
    <property type="match status" value="1"/>
</dbReference>
<dbReference type="FunFam" id="2.40.30.20:FF:000001">
    <property type="entry name" value="ATP synthase subunit alpha"/>
    <property type="match status" value="1"/>
</dbReference>
<dbReference type="FunFam" id="3.40.50.300:FF:000002">
    <property type="entry name" value="ATP synthase subunit alpha"/>
    <property type="match status" value="1"/>
</dbReference>
<dbReference type="Gene3D" id="2.40.30.20">
    <property type="match status" value="1"/>
</dbReference>
<dbReference type="Gene3D" id="1.20.150.20">
    <property type="entry name" value="ATP synthase alpha/beta chain, C-terminal domain"/>
    <property type="match status" value="1"/>
</dbReference>
<dbReference type="Gene3D" id="3.40.50.300">
    <property type="entry name" value="P-loop containing nucleotide triphosphate hydrolases"/>
    <property type="match status" value="1"/>
</dbReference>
<dbReference type="HAMAP" id="MF_01346">
    <property type="entry name" value="ATP_synth_alpha_bact"/>
    <property type="match status" value="1"/>
</dbReference>
<dbReference type="InterPro" id="IPR023366">
    <property type="entry name" value="ATP_synth_asu-like_sf"/>
</dbReference>
<dbReference type="InterPro" id="IPR000793">
    <property type="entry name" value="ATP_synth_asu_C"/>
</dbReference>
<dbReference type="InterPro" id="IPR038376">
    <property type="entry name" value="ATP_synth_asu_C_sf"/>
</dbReference>
<dbReference type="InterPro" id="IPR033732">
    <property type="entry name" value="ATP_synth_F1_a_nt-bd_dom"/>
</dbReference>
<dbReference type="InterPro" id="IPR005294">
    <property type="entry name" value="ATP_synth_F1_asu"/>
</dbReference>
<dbReference type="InterPro" id="IPR020003">
    <property type="entry name" value="ATPase_a/bsu_AS"/>
</dbReference>
<dbReference type="InterPro" id="IPR004100">
    <property type="entry name" value="ATPase_F1/V1/A1_a/bsu_N"/>
</dbReference>
<dbReference type="InterPro" id="IPR036121">
    <property type="entry name" value="ATPase_F1/V1/A1_a/bsu_N_sf"/>
</dbReference>
<dbReference type="InterPro" id="IPR000194">
    <property type="entry name" value="ATPase_F1/V1/A1_a/bsu_nucl-bd"/>
</dbReference>
<dbReference type="InterPro" id="IPR027417">
    <property type="entry name" value="P-loop_NTPase"/>
</dbReference>
<dbReference type="NCBIfam" id="TIGR00962">
    <property type="entry name" value="atpA"/>
    <property type="match status" value="1"/>
</dbReference>
<dbReference type="NCBIfam" id="NF009884">
    <property type="entry name" value="PRK13343.1"/>
    <property type="match status" value="1"/>
</dbReference>
<dbReference type="PANTHER" id="PTHR48082">
    <property type="entry name" value="ATP SYNTHASE SUBUNIT ALPHA, MITOCHONDRIAL"/>
    <property type="match status" value="1"/>
</dbReference>
<dbReference type="PANTHER" id="PTHR48082:SF2">
    <property type="entry name" value="ATP SYNTHASE SUBUNIT ALPHA, MITOCHONDRIAL"/>
    <property type="match status" value="1"/>
</dbReference>
<dbReference type="Pfam" id="PF00006">
    <property type="entry name" value="ATP-synt_ab"/>
    <property type="match status" value="1"/>
</dbReference>
<dbReference type="Pfam" id="PF00306">
    <property type="entry name" value="ATP-synt_ab_C"/>
    <property type="match status" value="1"/>
</dbReference>
<dbReference type="Pfam" id="PF02874">
    <property type="entry name" value="ATP-synt_ab_N"/>
    <property type="match status" value="1"/>
</dbReference>
<dbReference type="PIRSF" id="PIRSF039088">
    <property type="entry name" value="F_ATPase_subunit_alpha"/>
    <property type="match status" value="1"/>
</dbReference>
<dbReference type="SUPFAM" id="SSF47917">
    <property type="entry name" value="C-terminal domain of alpha and beta subunits of F1 ATP synthase"/>
    <property type="match status" value="1"/>
</dbReference>
<dbReference type="SUPFAM" id="SSF50615">
    <property type="entry name" value="N-terminal domain of alpha and beta subunits of F1 ATP synthase"/>
    <property type="match status" value="1"/>
</dbReference>
<dbReference type="SUPFAM" id="SSF52540">
    <property type="entry name" value="P-loop containing nucleoside triphosphate hydrolases"/>
    <property type="match status" value="1"/>
</dbReference>
<dbReference type="PROSITE" id="PS00152">
    <property type="entry name" value="ATPASE_ALPHA_BETA"/>
    <property type="match status" value="1"/>
</dbReference>
<geneLocation type="chloroplast"/>
<reference key="1">
    <citation type="journal article" date="2006" name="Mol. Genet. Genomics">
        <title>Distinctive architecture of the chloroplast genome in the chlorophycean green alga Stigeoclonium helveticum.</title>
        <authorList>
            <person name="Belanger A.-S."/>
            <person name="Brouard J.-S."/>
            <person name="Charlebois P."/>
            <person name="Otis C."/>
            <person name="Lemieux C."/>
            <person name="Turmel M."/>
        </authorList>
    </citation>
    <scope>NUCLEOTIDE SEQUENCE [LARGE SCALE GENOMIC DNA]</scope>
    <source>
        <strain>UTEX 441</strain>
    </source>
</reference>
<keyword id="KW-0066">ATP synthesis</keyword>
<keyword id="KW-0067">ATP-binding</keyword>
<keyword id="KW-0139">CF(1)</keyword>
<keyword id="KW-0150">Chloroplast</keyword>
<keyword id="KW-0375">Hydrogen ion transport</keyword>
<keyword id="KW-0406">Ion transport</keyword>
<keyword id="KW-0472">Membrane</keyword>
<keyword id="KW-0547">Nucleotide-binding</keyword>
<keyword id="KW-0934">Plastid</keyword>
<keyword id="KW-0793">Thylakoid</keyword>
<keyword id="KW-1278">Translocase</keyword>
<keyword id="KW-0813">Transport</keyword>
<accession>Q06SI2</accession>
<gene>
    <name evidence="1" type="primary">atpA</name>
</gene>
<protein>
    <recommendedName>
        <fullName evidence="1">ATP synthase subunit alpha, chloroplastic</fullName>
        <ecNumber evidence="1">7.1.2.2</ecNumber>
    </recommendedName>
    <alternativeName>
        <fullName evidence="1">ATP synthase F1 sector subunit alpha</fullName>
    </alternativeName>
    <alternativeName>
        <fullName evidence="1">F-ATPase subunit alpha</fullName>
    </alternativeName>
</protein>